<proteinExistence type="inferred from homology"/>
<sequence>MPVEYYLWLAAILFGIGLLGVLTKRNALILMMSVELMLNAANLTFLAFARRSGDLAGHAIAFFVIAVAAAEAAVGLAVVIAIYRSRGAINVDEVRVLSE</sequence>
<organism>
    <name type="scientific">Anaeromyxobacter sp. (strain K)</name>
    <dbReference type="NCBI Taxonomy" id="447217"/>
    <lineage>
        <taxon>Bacteria</taxon>
        <taxon>Pseudomonadati</taxon>
        <taxon>Myxococcota</taxon>
        <taxon>Myxococcia</taxon>
        <taxon>Myxococcales</taxon>
        <taxon>Cystobacterineae</taxon>
        <taxon>Anaeromyxobacteraceae</taxon>
        <taxon>Anaeromyxobacter</taxon>
    </lineage>
</organism>
<comment type="function">
    <text evidence="1">NDH-1 shuttles electrons from NADH, via FMN and iron-sulfur (Fe-S) centers, to quinones in the respiratory chain. The immediate electron acceptor for the enzyme in this species is believed to be ubiquinone. Couples the redox reaction to proton translocation (for every two electrons transferred, four hydrogen ions are translocated across the cytoplasmic membrane), and thus conserves the redox energy in a proton gradient.</text>
</comment>
<comment type="catalytic activity">
    <reaction evidence="1">
        <text>a quinone + NADH + 5 H(+)(in) = a quinol + NAD(+) + 4 H(+)(out)</text>
        <dbReference type="Rhea" id="RHEA:57888"/>
        <dbReference type="ChEBI" id="CHEBI:15378"/>
        <dbReference type="ChEBI" id="CHEBI:24646"/>
        <dbReference type="ChEBI" id="CHEBI:57540"/>
        <dbReference type="ChEBI" id="CHEBI:57945"/>
        <dbReference type="ChEBI" id="CHEBI:132124"/>
    </reaction>
</comment>
<comment type="subunit">
    <text evidence="1">NDH-1 is composed of 14 different subunits. Subunits NuoA, H, J, K, L, M, N constitute the membrane sector of the complex.</text>
</comment>
<comment type="subcellular location">
    <subcellularLocation>
        <location evidence="1">Cell inner membrane</location>
        <topology evidence="1">Multi-pass membrane protein</topology>
    </subcellularLocation>
</comment>
<comment type="similarity">
    <text evidence="1">Belongs to the complex I subunit 4L family.</text>
</comment>
<feature type="chain" id="PRO_0000389928" description="NADH-quinone oxidoreductase subunit K">
    <location>
        <begin position="1"/>
        <end position="99"/>
    </location>
</feature>
<feature type="transmembrane region" description="Helical" evidence="1">
    <location>
        <begin position="2"/>
        <end position="22"/>
    </location>
</feature>
<feature type="transmembrane region" description="Helical" evidence="1">
    <location>
        <begin position="28"/>
        <end position="48"/>
    </location>
</feature>
<feature type="transmembrane region" description="Helical" evidence="1">
    <location>
        <begin position="60"/>
        <end position="80"/>
    </location>
</feature>
<keyword id="KW-0997">Cell inner membrane</keyword>
<keyword id="KW-1003">Cell membrane</keyword>
<keyword id="KW-0472">Membrane</keyword>
<keyword id="KW-0520">NAD</keyword>
<keyword id="KW-0874">Quinone</keyword>
<keyword id="KW-1278">Translocase</keyword>
<keyword id="KW-0812">Transmembrane</keyword>
<keyword id="KW-1133">Transmembrane helix</keyword>
<keyword id="KW-0813">Transport</keyword>
<keyword id="KW-0830">Ubiquinone</keyword>
<evidence type="ECO:0000255" key="1">
    <source>
        <dbReference type="HAMAP-Rule" id="MF_01456"/>
    </source>
</evidence>
<reference key="1">
    <citation type="submission" date="2008-08" db="EMBL/GenBank/DDBJ databases">
        <title>Complete sequence of Anaeromyxobacter sp. K.</title>
        <authorList>
            <consortium name="US DOE Joint Genome Institute"/>
            <person name="Lucas S."/>
            <person name="Copeland A."/>
            <person name="Lapidus A."/>
            <person name="Glavina del Rio T."/>
            <person name="Dalin E."/>
            <person name="Tice H."/>
            <person name="Bruce D."/>
            <person name="Goodwin L."/>
            <person name="Pitluck S."/>
            <person name="Saunders E."/>
            <person name="Brettin T."/>
            <person name="Detter J.C."/>
            <person name="Han C."/>
            <person name="Larimer F."/>
            <person name="Land M."/>
            <person name="Hauser L."/>
            <person name="Kyrpides N."/>
            <person name="Ovchinnikiva G."/>
            <person name="Beliaev A."/>
        </authorList>
    </citation>
    <scope>NUCLEOTIDE SEQUENCE [LARGE SCALE GENOMIC DNA]</scope>
    <source>
        <strain>K</strain>
    </source>
</reference>
<name>NUOK_ANASK</name>
<protein>
    <recommendedName>
        <fullName evidence="1">NADH-quinone oxidoreductase subunit K</fullName>
        <ecNumber evidence="1">7.1.1.-</ecNumber>
    </recommendedName>
    <alternativeName>
        <fullName evidence="1">NADH dehydrogenase I subunit K</fullName>
    </alternativeName>
    <alternativeName>
        <fullName evidence="1">NDH-1 subunit K</fullName>
    </alternativeName>
</protein>
<gene>
    <name evidence="1" type="primary">nuoK</name>
    <name type="ordered locus">AnaeK_4329</name>
</gene>
<dbReference type="EC" id="7.1.1.-" evidence="1"/>
<dbReference type="EMBL" id="CP001131">
    <property type="protein sequence ID" value="ACG75532.1"/>
    <property type="molecule type" value="Genomic_DNA"/>
</dbReference>
<dbReference type="RefSeq" id="WP_012528283.1">
    <property type="nucleotide sequence ID" value="NC_011145.1"/>
</dbReference>
<dbReference type="SMR" id="B4UIW0"/>
<dbReference type="KEGG" id="ank:AnaeK_4329"/>
<dbReference type="HOGENOM" id="CLU_144724_0_0_7"/>
<dbReference type="Proteomes" id="UP000001871">
    <property type="component" value="Chromosome"/>
</dbReference>
<dbReference type="GO" id="GO:0030964">
    <property type="term" value="C:NADH dehydrogenase complex"/>
    <property type="evidence" value="ECO:0007669"/>
    <property type="project" value="TreeGrafter"/>
</dbReference>
<dbReference type="GO" id="GO:0005886">
    <property type="term" value="C:plasma membrane"/>
    <property type="evidence" value="ECO:0007669"/>
    <property type="project" value="UniProtKB-SubCell"/>
</dbReference>
<dbReference type="GO" id="GO:0050136">
    <property type="term" value="F:NADH:ubiquinone reductase (non-electrogenic) activity"/>
    <property type="evidence" value="ECO:0007669"/>
    <property type="project" value="UniProtKB-UniRule"/>
</dbReference>
<dbReference type="GO" id="GO:0048038">
    <property type="term" value="F:quinone binding"/>
    <property type="evidence" value="ECO:0007669"/>
    <property type="project" value="UniProtKB-KW"/>
</dbReference>
<dbReference type="GO" id="GO:0042773">
    <property type="term" value="P:ATP synthesis coupled electron transport"/>
    <property type="evidence" value="ECO:0007669"/>
    <property type="project" value="InterPro"/>
</dbReference>
<dbReference type="FunFam" id="1.10.287.3510:FF:000001">
    <property type="entry name" value="NADH-quinone oxidoreductase subunit K"/>
    <property type="match status" value="1"/>
</dbReference>
<dbReference type="Gene3D" id="1.10.287.3510">
    <property type="match status" value="1"/>
</dbReference>
<dbReference type="HAMAP" id="MF_01456">
    <property type="entry name" value="NDH1_NuoK"/>
    <property type="match status" value="1"/>
</dbReference>
<dbReference type="InterPro" id="IPR001133">
    <property type="entry name" value="NADH_UbQ_OxRdtase_chain4L/K"/>
</dbReference>
<dbReference type="InterPro" id="IPR039428">
    <property type="entry name" value="NUOK/Mnh_C1-like"/>
</dbReference>
<dbReference type="NCBIfam" id="NF004320">
    <property type="entry name" value="PRK05715.1-2"/>
    <property type="match status" value="1"/>
</dbReference>
<dbReference type="NCBIfam" id="NF004321">
    <property type="entry name" value="PRK05715.1-3"/>
    <property type="match status" value="1"/>
</dbReference>
<dbReference type="NCBIfam" id="NF004323">
    <property type="entry name" value="PRK05715.1-5"/>
    <property type="match status" value="1"/>
</dbReference>
<dbReference type="PANTHER" id="PTHR11434:SF16">
    <property type="entry name" value="NADH-UBIQUINONE OXIDOREDUCTASE CHAIN 4L"/>
    <property type="match status" value="1"/>
</dbReference>
<dbReference type="PANTHER" id="PTHR11434">
    <property type="entry name" value="NADH-UBIQUINONE OXIDOREDUCTASE SUBUNIT ND4L"/>
    <property type="match status" value="1"/>
</dbReference>
<dbReference type="Pfam" id="PF00420">
    <property type="entry name" value="Oxidored_q2"/>
    <property type="match status" value="1"/>
</dbReference>
<accession>B4UIW0</accession>